<comment type="subcellular location">
    <subcellularLocation>
        <location>Plastid</location>
        <location>Chloroplast</location>
    </subcellularLocation>
</comment>
<comment type="similarity">
    <text evidence="1">Belongs to the bacterial ribosomal protein bL33 family.</text>
</comment>
<keyword id="KW-0150">Chloroplast</keyword>
<keyword id="KW-0934">Plastid</keyword>
<keyword id="KW-0687">Ribonucleoprotein</keyword>
<keyword id="KW-0689">Ribosomal protein</keyword>
<feature type="chain" id="PRO_0000356820" description="Large ribosomal subunit protein bL33c">
    <location>
        <begin position="1"/>
        <end position="66"/>
    </location>
</feature>
<reference key="1">
    <citation type="submission" date="2007-03" db="EMBL/GenBank/DDBJ databases">
        <title>Sequence analysis of Arabidopsis pumila JS2 chloroplast DNA.</title>
        <authorList>
            <person name="Hosouchi T."/>
            <person name="Tsuruoka H."/>
            <person name="Kotani H."/>
        </authorList>
    </citation>
    <scope>NUCLEOTIDE SEQUENCE [LARGE SCALE GENOMIC DNA]</scope>
</reference>
<sequence length="66" mass="7724">MAKGKDVRVTIILECTSCVRNDIKKESSGISRYITQKNRHNTPSRLELRKFCPYCYKHTIHGEIKK</sequence>
<geneLocation type="chloroplast"/>
<dbReference type="EMBL" id="AP009368">
    <property type="protein sequence ID" value="BAF49960.1"/>
    <property type="molecule type" value="Genomic_DNA"/>
</dbReference>
<dbReference type="RefSeq" id="YP_001123136.1">
    <property type="nucleotide sequence ID" value="NC_009267.1"/>
</dbReference>
<dbReference type="GeneID" id="4962393"/>
<dbReference type="GO" id="GO:0009507">
    <property type="term" value="C:chloroplast"/>
    <property type="evidence" value="ECO:0007669"/>
    <property type="project" value="UniProtKB-SubCell"/>
</dbReference>
<dbReference type="GO" id="GO:1990904">
    <property type="term" value="C:ribonucleoprotein complex"/>
    <property type="evidence" value="ECO:0007669"/>
    <property type="project" value="UniProtKB-KW"/>
</dbReference>
<dbReference type="GO" id="GO:0005840">
    <property type="term" value="C:ribosome"/>
    <property type="evidence" value="ECO:0007669"/>
    <property type="project" value="UniProtKB-KW"/>
</dbReference>
<dbReference type="GO" id="GO:0003735">
    <property type="term" value="F:structural constituent of ribosome"/>
    <property type="evidence" value="ECO:0007669"/>
    <property type="project" value="InterPro"/>
</dbReference>
<dbReference type="GO" id="GO:0006412">
    <property type="term" value="P:translation"/>
    <property type="evidence" value="ECO:0007669"/>
    <property type="project" value="UniProtKB-UniRule"/>
</dbReference>
<dbReference type="FunFam" id="2.20.28.120:FF:000004">
    <property type="entry name" value="50S ribosomal protein L33, chloroplastic"/>
    <property type="match status" value="1"/>
</dbReference>
<dbReference type="Gene3D" id="2.20.28.120">
    <property type="entry name" value="Ribosomal protein L33"/>
    <property type="match status" value="1"/>
</dbReference>
<dbReference type="HAMAP" id="MF_00294">
    <property type="entry name" value="Ribosomal_bL33"/>
    <property type="match status" value="1"/>
</dbReference>
<dbReference type="InterPro" id="IPR001705">
    <property type="entry name" value="Ribosomal_bL33"/>
</dbReference>
<dbReference type="InterPro" id="IPR018264">
    <property type="entry name" value="Ribosomal_bL33_CS"/>
</dbReference>
<dbReference type="InterPro" id="IPR038584">
    <property type="entry name" value="Ribosomal_bL33_sf"/>
</dbReference>
<dbReference type="InterPro" id="IPR011332">
    <property type="entry name" value="Ribosomal_zn-bd"/>
</dbReference>
<dbReference type="NCBIfam" id="NF001764">
    <property type="entry name" value="PRK00504.1"/>
    <property type="match status" value="1"/>
</dbReference>
<dbReference type="NCBIfam" id="NF001860">
    <property type="entry name" value="PRK00595.1"/>
    <property type="match status" value="1"/>
</dbReference>
<dbReference type="NCBIfam" id="TIGR01023">
    <property type="entry name" value="rpmG_bact"/>
    <property type="match status" value="1"/>
</dbReference>
<dbReference type="PANTHER" id="PTHR43168">
    <property type="entry name" value="50S RIBOSOMAL PROTEIN L33, CHLOROPLASTIC"/>
    <property type="match status" value="1"/>
</dbReference>
<dbReference type="PANTHER" id="PTHR43168:SF2">
    <property type="entry name" value="LARGE RIBOSOMAL SUBUNIT PROTEIN BL33C"/>
    <property type="match status" value="1"/>
</dbReference>
<dbReference type="Pfam" id="PF00471">
    <property type="entry name" value="Ribosomal_L33"/>
    <property type="match status" value="1"/>
</dbReference>
<dbReference type="SUPFAM" id="SSF57829">
    <property type="entry name" value="Zn-binding ribosomal proteins"/>
    <property type="match status" value="1"/>
</dbReference>
<dbReference type="PROSITE" id="PS00582">
    <property type="entry name" value="RIBOSOMAL_L33"/>
    <property type="match status" value="1"/>
</dbReference>
<accession>A4QJV2</accession>
<proteinExistence type="inferred from homology"/>
<protein>
    <recommendedName>
        <fullName evidence="1">Large ribosomal subunit protein bL33c</fullName>
    </recommendedName>
    <alternativeName>
        <fullName evidence="2">50S ribosomal protein L33, chloroplastic</fullName>
    </alternativeName>
</protein>
<evidence type="ECO:0000255" key="1">
    <source>
        <dbReference type="HAMAP-Rule" id="MF_00294"/>
    </source>
</evidence>
<evidence type="ECO:0000305" key="2"/>
<organism>
    <name type="scientific">Olimarabidopsis pumila</name>
    <name type="common">Dwarf rocket</name>
    <name type="synonym">Arabidopsis griffithiana</name>
    <dbReference type="NCBI Taxonomy" id="74718"/>
    <lineage>
        <taxon>Eukaryota</taxon>
        <taxon>Viridiplantae</taxon>
        <taxon>Streptophyta</taxon>
        <taxon>Embryophyta</taxon>
        <taxon>Tracheophyta</taxon>
        <taxon>Spermatophyta</taxon>
        <taxon>Magnoliopsida</taxon>
        <taxon>eudicotyledons</taxon>
        <taxon>Gunneridae</taxon>
        <taxon>Pentapetalae</taxon>
        <taxon>rosids</taxon>
        <taxon>malvids</taxon>
        <taxon>Brassicales</taxon>
        <taxon>Brassicaceae</taxon>
        <taxon>Alyssopsideae</taxon>
        <taxon>Olimarabidopsis</taxon>
    </lineage>
</organism>
<gene>
    <name evidence="1" type="primary">rpl33</name>
</gene>
<name>RK33_OLIPU</name>